<comment type="subcellular location">
    <subcellularLocation>
        <location evidence="2">Cell membrane</location>
        <topology evidence="2">Multi-pass membrane protein</topology>
    </subcellularLocation>
</comment>
<comment type="similarity">
    <text evidence="2">To M.jannaschii MJ0554 and MJ0587.</text>
</comment>
<keyword id="KW-1003">Cell membrane</keyword>
<keyword id="KW-0472">Membrane</keyword>
<keyword id="KW-1185">Reference proteome</keyword>
<keyword id="KW-0812">Transmembrane</keyword>
<keyword id="KW-1133">Transmembrane helix</keyword>
<protein>
    <recommendedName>
        <fullName>Uncharacterized protein MJ0129</fullName>
    </recommendedName>
</protein>
<organism>
    <name type="scientific">Methanocaldococcus jannaschii (strain ATCC 43067 / DSM 2661 / JAL-1 / JCM 10045 / NBRC 100440)</name>
    <name type="common">Methanococcus jannaschii</name>
    <dbReference type="NCBI Taxonomy" id="243232"/>
    <lineage>
        <taxon>Archaea</taxon>
        <taxon>Methanobacteriati</taxon>
        <taxon>Methanobacteriota</taxon>
        <taxon>Methanomada group</taxon>
        <taxon>Methanococci</taxon>
        <taxon>Methanococcales</taxon>
        <taxon>Methanocaldococcaceae</taxon>
        <taxon>Methanocaldococcus</taxon>
    </lineage>
</organism>
<reference key="1">
    <citation type="journal article" date="1996" name="Science">
        <title>Complete genome sequence of the methanogenic archaeon, Methanococcus jannaschii.</title>
        <authorList>
            <person name="Bult C.J."/>
            <person name="White O."/>
            <person name="Olsen G.J."/>
            <person name="Zhou L."/>
            <person name="Fleischmann R.D."/>
            <person name="Sutton G.G."/>
            <person name="Blake J.A."/>
            <person name="FitzGerald L.M."/>
            <person name="Clayton R.A."/>
            <person name="Gocayne J.D."/>
            <person name="Kerlavage A.R."/>
            <person name="Dougherty B.A."/>
            <person name="Tomb J.-F."/>
            <person name="Adams M.D."/>
            <person name="Reich C.I."/>
            <person name="Overbeek R."/>
            <person name="Kirkness E.F."/>
            <person name="Weinstock K.G."/>
            <person name="Merrick J.M."/>
            <person name="Glodek A."/>
            <person name="Scott J.L."/>
            <person name="Geoghagen N.S.M."/>
            <person name="Weidman J.F."/>
            <person name="Fuhrmann J.L."/>
            <person name="Nguyen D."/>
            <person name="Utterback T.R."/>
            <person name="Kelley J.M."/>
            <person name="Peterson J.D."/>
            <person name="Sadow P.W."/>
            <person name="Hanna M.C."/>
            <person name="Cotton M.D."/>
            <person name="Roberts K.M."/>
            <person name="Hurst M.A."/>
            <person name="Kaine B.P."/>
            <person name="Borodovsky M."/>
            <person name="Klenk H.-P."/>
            <person name="Fraser C.M."/>
            <person name="Smith H.O."/>
            <person name="Woese C.R."/>
            <person name="Venter J.C."/>
        </authorList>
    </citation>
    <scope>NUCLEOTIDE SEQUENCE [LARGE SCALE GENOMIC DNA]</scope>
    <source>
        <strain>ATCC 43067 / DSM 2661 / JAL-1 / JCM 10045 / NBRC 100440</strain>
    </source>
</reference>
<accession>Q57593</accession>
<evidence type="ECO:0000255" key="1"/>
<evidence type="ECO:0000305" key="2"/>
<name>Y129_METJA</name>
<sequence>MLSFVVMSFLIFVIVMVNEHKAHLSVIQKMILAVVNGSITIILSIIVFYIFYPQNISLFLITAGILTVFVFLYGLLLFLFGFTHRELSYLSKYDKYKFLCKFTIEMFSSLTNHAFLTISAIVLYQIQHPKPTIDFIVMIGMITISVIVVMLLFLKTYSIIIKQLKKLENN</sequence>
<gene>
    <name type="ordered locus">MJ0129</name>
</gene>
<dbReference type="EMBL" id="L77117">
    <property type="protein sequence ID" value="AAB98118.1"/>
    <property type="molecule type" value="Genomic_DNA"/>
</dbReference>
<dbReference type="PIR" id="A64316">
    <property type="entry name" value="A64316"/>
</dbReference>
<dbReference type="SMR" id="Q57593"/>
<dbReference type="STRING" id="243232.MJ_0129"/>
<dbReference type="PaxDb" id="243232-MJ_0129"/>
<dbReference type="DNASU" id="1450971"/>
<dbReference type="EnsemblBacteria" id="AAB98118">
    <property type="protein sequence ID" value="AAB98118"/>
    <property type="gene ID" value="MJ_0129"/>
</dbReference>
<dbReference type="KEGG" id="mja:MJ_0129"/>
<dbReference type="HOGENOM" id="CLU_1718222_0_0_2"/>
<dbReference type="InParanoid" id="Q57593"/>
<dbReference type="PhylomeDB" id="Q57593"/>
<dbReference type="Proteomes" id="UP000000805">
    <property type="component" value="Chromosome"/>
</dbReference>
<dbReference type="GO" id="GO:0005886">
    <property type="term" value="C:plasma membrane"/>
    <property type="evidence" value="ECO:0007669"/>
    <property type="project" value="UniProtKB-SubCell"/>
</dbReference>
<dbReference type="InterPro" id="IPR035582">
    <property type="entry name" value="DUF5418"/>
</dbReference>
<dbReference type="Pfam" id="PF17439">
    <property type="entry name" value="DUF5418"/>
    <property type="match status" value="1"/>
</dbReference>
<feature type="chain" id="PRO_0000106707" description="Uncharacterized protein MJ0129">
    <location>
        <begin position="1"/>
        <end position="170"/>
    </location>
</feature>
<feature type="transmembrane region" description="Helical" evidence="1">
    <location>
        <begin position="31"/>
        <end position="51"/>
    </location>
</feature>
<feature type="transmembrane region" description="Helical" evidence="1">
    <location>
        <begin position="58"/>
        <end position="78"/>
    </location>
</feature>
<feature type="transmembrane region" description="Helical" evidence="1">
    <location>
        <begin position="133"/>
        <end position="153"/>
    </location>
</feature>
<proteinExistence type="predicted"/>